<sequence length="159" mass="18112">MTSLVYFSSVSENTHRFVQRLGLPATRIPIHDRDGSFRVDEPYVLILPTYGGGVTVTGRDTSYVPKPVIRFLNNPHNRSLIRAVIAAGNTNFGESFCYAGNIISQKCHVPFLYRFELMGTAEDVDRVREGLGEFWNHLETEKEHGQWRQPSLTRSRQEA</sequence>
<organism>
    <name type="scientific">Rhodococcus erythropolis (strain PR4 / NBRC 100887)</name>
    <dbReference type="NCBI Taxonomy" id="234621"/>
    <lineage>
        <taxon>Bacteria</taxon>
        <taxon>Bacillati</taxon>
        <taxon>Actinomycetota</taxon>
        <taxon>Actinomycetes</taxon>
        <taxon>Mycobacteriales</taxon>
        <taxon>Nocardiaceae</taxon>
        <taxon>Rhodococcus</taxon>
        <taxon>Rhodococcus erythropolis group</taxon>
    </lineage>
</organism>
<reference key="1">
    <citation type="submission" date="2005-03" db="EMBL/GenBank/DDBJ databases">
        <title>Comparison of the complete genome sequences of Rhodococcus erythropolis PR4 and Rhodococcus opacus B4.</title>
        <authorList>
            <person name="Takarada H."/>
            <person name="Sekine M."/>
            <person name="Hosoyama A."/>
            <person name="Yamada R."/>
            <person name="Fujisawa T."/>
            <person name="Omata S."/>
            <person name="Shimizu A."/>
            <person name="Tsukatani N."/>
            <person name="Tanikawa S."/>
            <person name="Fujita N."/>
            <person name="Harayama S."/>
        </authorList>
    </citation>
    <scope>NUCLEOTIDE SEQUENCE [LARGE SCALE GENOMIC DNA]</scope>
    <source>
        <strain>PR4 / NBRC 100887</strain>
    </source>
</reference>
<protein>
    <recommendedName>
        <fullName evidence="1">Protein NrdI</fullName>
    </recommendedName>
</protein>
<evidence type="ECO:0000255" key="1">
    <source>
        <dbReference type="HAMAP-Rule" id="MF_00128"/>
    </source>
</evidence>
<feature type="chain" id="PRO_1000203158" description="Protein NrdI">
    <location>
        <begin position="1"/>
        <end position="159"/>
    </location>
</feature>
<name>NRDI_RHOE4</name>
<comment type="function">
    <text evidence="1">Probably involved in ribonucleotide reductase function.</text>
</comment>
<comment type="similarity">
    <text evidence="1">Belongs to the NrdI family.</text>
</comment>
<gene>
    <name evidence="1" type="primary">nrdI</name>
    <name type="ordered locus">RER_23510</name>
</gene>
<dbReference type="EMBL" id="AP008957">
    <property type="protein sequence ID" value="BAH33059.1"/>
    <property type="molecule type" value="Genomic_DNA"/>
</dbReference>
<dbReference type="RefSeq" id="WP_003944767.1">
    <property type="nucleotide sequence ID" value="NC_012490.1"/>
</dbReference>
<dbReference type="SMR" id="C0ZXH4"/>
<dbReference type="GeneID" id="93803341"/>
<dbReference type="KEGG" id="rer:RER_23510"/>
<dbReference type="eggNOG" id="COG1780">
    <property type="taxonomic scope" value="Bacteria"/>
</dbReference>
<dbReference type="HOGENOM" id="CLU_114845_0_0_11"/>
<dbReference type="Proteomes" id="UP000002204">
    <property type="component" value="Chromosome"/>
</dbReference>
<dbReference type="GO" id="GO:0010181">
    <property type="term" value="F:FMN binding"/>
    <property type="evidence" value="ECO:0007669"/>
    <property type="project" value="InterPro"/>
</dbReference>
<dbReference type="GO" id="GO:0036211">
    <property type="term" value="P:protein modification process"/>
    <property type="evidence" value="ECO:0007669"/>
    <property type="project" value="InterPro"/>
</dbReference>
<dbReference type="Gene3D" id="3.40.50.360">
    <property type="match status" value="1"/>
</dbReference>
<dbReference type="HAMAP" id="MF_00128">
    <property type="entry name" value="NrdI"/>
    <property type="match status" value="1"/>
</dbReference>
<dbReference type="InterPro" id="IPR029039">
    <property type="entry name" value="Flavoprotein-like_sf"/>
</dbReference>
<dbReference type="InterPro" id="IPR020852">
    <property type="entry name" value="RNR_Ib_NrdI_bac"/>
</dbReference>
<dbReference type="InterPro" id="IPR004465">
    <property type="entry name" value="RNR_NrdI"/>
</dbReference>
<dbReference type="NCBIfam" id="TIGR00333">
    <property type="entry name" value="nrdI"/>
    <property type="match status" value="1"/>
</dbReference>
<dbReference type="PANTHER" id="PTHR37297">
    <property type="entry name" value="PROTEIN NRDI"/>
    <property type="match status" value="1"/>
</dbReference>
<dbReference type="PANTHER" id="PTHR37297:SF1">
    <property type="entry name" value="PROTEIN NRDI"/>
    <property type="match status" value="1"/>
</dbReference>
<dbReference type="Pfam" id="PF07972">
    <property type="entry name" value="Flavodoxin_NdrI"/>
    <property type="match status" value="1"/>
</dbReference>
<dbReference type="PIRSF" id="PIRSF005087">
    <property type="entry name" value="NrdI"/>
    <property type="match status" value="1"/>
</dbReference>
<dbReference type="SUPFAM" id="SSF52218">
    <property type="entry name" value="Flavoproteins"/>
    <property type="match status" value="1"/>
</dbReference>
<accession>C0ZXH4</accession>
<proteinExistence type="inferred from homology"/>